<reference key="1">
    <citation type="submission" date="2007-02" db="EMBL/GenBank/DDBJ databases">
        <title>Complete sequence of chromosome 1 of Rhodobacter sphaeroides ATCC 17029.</title>
        <authorList>
            <person name="Copeland A."/>
            <person name="Lucas S."/>
            <person name="Lapidus A."/>
            <person name="Barry K."/>
            <person name="Detter J.C."/>
            <person name="Glavina del Rio T."/>
            <person name="Hammon N."/>
            <person name="Israni S."/>
            <person name="Dalin E."/>
            <person name="Tice H."/>
            <person name="Pitluck S."/>
            <person name="Kiss H."/>
            <person name="Brettin T."/>
            <person name="Bruce D."/>
            <person name="Han C."/>
            <person name="Tapia R."/>
            <person name="Gilna P."/>
            <person name="Schmutz J."/>
            <person name="Larimer F."/>
            <person name="Land M."/>
            <person name="Hauser L."/>
            <person name="Kyrpides N."/>
            <person name="Mikhailova N."/>
            <person name="Richardson P."/>
            <person name="Mackenzie C."/>
            <person name="Choudhary M."/>
            <person name="Donohue T.J."/>
            <person name="Kaplan S."/>
        </authorList>
    </citation>
    <scope>NUCLEOTIDE SEQUENCE [LARGE SCALE GENOMIC DNA]</scope>
    <source>
        <strain>ATCC 17029 / ATH 2.4.9</strain>
    </source>
</reference>
<feature type="chain" id="PRO_0000306498" description="Imidazolonepropionase">
    <location>
        <begin position="1"/>
        <end position="395"/>
    </location>
</feature>
<feature type="binding site" evidence="1">
    <location>
        <position position="63"/>
    </location>
    <ligand>
        <name>Fe(3+)</name>
        <dbReference type="ChEBI" id="CHEBI:29034"/>
    </ligand>
</feature>
<feature type="binding site" evidence="1">
    <location>
        <position position="63"/>
    </location>
    <ligand>
        <name>Zn(2+)</name>
        <dbReference type="ChEBI" id="CHEBI:29105"/>
    </ligand>
</feature>
<feature type="binding site" evidence="1">
    <location>
        <position position="65"/>
    </location>
    <ligand>
        <name>Fe(3+)</name>
        <dbReference type="ChEBI" id="CHEBI:29034"/>
    </ligand>
</feature>
<feature type="binding site" evidence="1">
    <location>
        <position position="65"/>
    </location>
    <ligand>
        <name>Zn(2+)</name>
        <dbReference type="ChEBI" id="CHEBI:29105"/>
    </ligand>
</feature>
<feature type="binding site" evidence="1">
    <location>
        <position position="72"/>
    </location>
    <ligand>
        <name>4-imidazolone-5-propanoate</name>
        <dbReference type="ChEBI" id="CHEBI:77893"/>
    </ligand>
</feature>
<feature type="binding site" evidence="1">
    <location>
        <position position="135"/>
    </location>
    <ligand>
        <name>4-imidazolone-5-propanoate</name>
        <dbReference type="ChEBI" id="CHEBI:77893"/>
    </ligand>
</feature>
<feature type="binding site" evidence="1">
    <location>
        <position position="135"/>
    </location>
    <ligand>
        <name>N-formimidoyl-L-glutamate</name>
        <dbReference type="ChEBI" id="CHEBI:58928"/>
    </ligand>
</feature>
<feature type="binding site" evidence="1">
    <location>
        <position position="168"/>
    </location>
    <ligand>
        <name>4-imidazolone-5-propanoate</name>
        <dbReference type="ChEBI" id="CHEBI:77893"/>
    </ligand>
</feature>
<feature type="binding site" evidence="1">
    <location>
        <position position="233"/>
    </location>
    <ligand>
        <name>Fe(3+)</name>
        <dbReference type="ChEBI" id="CHEBI:29034"/>
    </ligand>
</feature>
<feature type="binding site" evidence="1">
    <location>
        <position position="233"/>
    </location>
    <ligand>
        <name>Zn(2+)</name>
        <dbReference type="ChEBI" id="CHEBI:29105"/>
    </ligand>
</feature>
<feature type="binding site" evidence="1">
    <location>
        <position position="236"/>
    </location>
    <ligand>
        <name>4-imidazolone-5-propanoate</name>
        <dbReference type="ChEBI" id="CHEBI:77893"/>
    </ligand>
</feature>
<feature type="binding site" evidence="1">
    <location>
        <position position="308"/>
    </location>
    <ligand>
        <name>Fe(3+)</name>
        <dbReference type="ChEBI" id="CHEBI:29034"/>
    </ligand>
</feature>
<feature type="binding site" evidence="1">
    <location>
        <position position="308"/>
    </location>
    <ligand>
        <name>Zn(2+)</name>
        <dbReference type="ChEBI" id="CHEBI:29105"/>
    </ligand>
</feature>
<feature type="binding site" evidence="1">
    <location>
        <position position="310"/>
    </location>
    <ligand>
        <name>N-formimidoyl-L-glutamate</name>
        <dbReference type="ChEBI" id="CHEBI:58928"/>
    </ligand>
</feature>
<feature type="binding site" evidence="1">
    <location>
        <position position="312"/>
    </location>
    <ligand>
        <name>N-formimidoyl-L-glutamate</name>
        <dbReference type="ChEBI" id="CHEBI:58928"/>
    </ligand>
</feature>
<feature type="binding site" evidence="1">
    <location>
        <position position="313"/>
    </location>
    <ligand>
        <name>4-imidazolone-5-propanoate</name>
        <dbReference type="ChEBI" id="CHEBI:77893"/>
    </ligand>
</feature>
<protein>
    <recommendedName>
        <fullName evidence="1">Imidazolonepropionase</fullName>
        <ecNumber evidence="1">3.5.2.7</ecNumber>
    </recommendedName>
    <alternativeName>
        <fullName evidence="1">Imidazolone-5-propionate hydrolase</fullName>
    </alternativeName>
</protein>
<comment type="function">
    <text evidence="1">Catalyzes the hydrolytic cleavage of the carbon-nitrogen bond in imidazolone-5-propanoate to yield N-formimidoyl-L-glutamate. It is the third step in the universal histidine degradation pathway.</text>
</comment>
<comment type="catalytic activity">
    <reaction evidence="1">
        <text>4-imidazolone-5-propanoate + H2O = N-formimidoyl-L-glutamate</text>
        <dbReference type="Rhea" id="RHEA:23660"/>
        <dbReference type="ChEBI" id="CHEBI:15377"/>
        <dbReference type="ChEBI" id="CHEBI:58928"/>
        <dbReference type="ChEBI" id="CHEBI:77893"/>
        <dbReference type="EC" id="3.5.2.7"/>
    </reaction>
</comment>
<comment type="cofactor">
    <cofactor evidence="1">
        <name>Zn(2+)</name>
        <dbReference type="ChEBI" id="CHEBI:29105"/>
    </cofactor>
    <cofactor evidence="1">
        <name>Fe(3+)</name>
        <dbReference type="ChEBI" id="CHEBI:29034"/>
    </cofactor>
    <text evidence="1">Binds 1 zinc or iron ion per subunit.</text>
</comment>
<comment type="pathway">
    <text evidence="1">Amino-acid degradation; L-histidine degradation into L-glutamate; N-formimidoyl-L-glutamate from L-histidine: step 3/3.</text>
</comment>
<comment type="subcellular location">
    <subcellularLocation>
        <location evidence="1">Cytoplasm</location>
    </subcellularLocation>
</comment>
<comment type="similarity">
    <text evidence="1">Belongs to the metallo-dependent hydrolases superfamily. HutI family.</text>
</comment>
<comment type="sequence caution" evidence="2">
    <conflict type="erroneous initiation">
        <sequence resource="EMBL-CDS" id="ABN76688"/>
    </conflict>
</comment>
<name>HUTI_CERS1</name>
<evidence type="ECO:0000255" key="1">
    <source>
        <dbReference type="HAMAP-Rule" id="MF_00372"/>
    </source>
</evidence>
<evidence type="ECO:0000305" key="2"/>
<gene>
    <name evidence="1" type="primary">hutI</name>
    <name type="ordered locus">Rsph17029_1578</name>
</gene>
<organism>
    <name type="scientific">Cereibacter sphaeroides (strain ATCC 17029 / ATH 2.4.9)</name>
    <name type="common">Rhodobacter sphaeroides</name>
    <dbReference type="NCBI Taxonomy" id="349101"/>
    <lineage>
        <taxon>Bacteria</taxon>
        <taxon>Pseudomonadati</taxon>
        <taxon>Pseudomonadota</taxon>
        <taxon>Alphaproteobacteria</taxon>
        <taxon>Rhodobacterales</taxon>
        <taxon>Paracoccaceae</taxon>
        <taxon>Cereibacter</taxon>
    </lineage>
</organism>
<dbReference type="EC" id="3.5.2.7" evidence="1"/>
<dbReference type="EMBL" id="CP000577">
    <property type="protein sequence ID" value="ABN76688.1"/>
    <property type="status" value="ALT_INIT"/>
    <property type="molecule type" value="Genomic_DNA"/>
</dbReference>
<dbReference type="RefSeq" id="WP_043828065.1">
    <property type="nucleotide sequence ID" value="NC_009049.1"/>
</dbReference>
<dbReference type="SMR" id="A3PK22"/>
<dbReference type="KEGG" id="rsh:Rsph17029_1578"/>
<dbReference type="HOGENOM" id="CLU_041647_0_0_5"/>
<dbReference type="UniPathway" id="UPA00379">
    <property type="reaction ID" value="UER00551"/>
</dbReference>
<dbReference type="GO" id="GO:0005737">
    <property type="term" value="C:cytoplasm"/>
    <property type="evidence" value="ECO:0007669"/>
    <property type="project" value="UniProtKB-SubCell"/>
</dbReference>
<dbReference type="GO" id="GO:0050480">
    <property type="term" value="F:imidazolonepropionase activity"/>
    <property type="evidence" value="ECO:0007669"/>
    <property type="project" value="UniProtKB-UniRule"/>
</dbReference>
<dbReference type="GO" id="GO:0005506">
    <property type="term" value="F:iron ion binding"/>
    <property type="evidence" value="ECO:0007669"/>
    <property type="project" value="UniProtKB-UniRule"/>
</dbReference>
<dbReference type="GO" id="GO:0008270">
    <property type="term" value="F:zinc ion binding"/>
    <property type="evidence" value="ECO:0007669"/>
    <property type="project" value="UniProtKB-UniRule"/>
</dbReference>
<dbReference type="GO" id="GO:0019556">
    <property type="term" value="P:L-histidine catabolic process to glutamate and formamide"/>
    <property type="evidence" value="ECO:0007669"/>
    <property type="project" value="UniProtKB-UniPathway"/>
</dbReference>
<dbReference type="GO" id="GO:0019557">
    <property type="term" value="P:L-histidine catabolic process to glutamate and formate"/>
    <property type="evidence" value="ECO:0007669"/>
    <property type="project" value="UniProtKB-UniPathway"/>
</dbReference>
<dbReference type="FunFam" id="3.20.20.140:FF:000007">
    <property type="entry name" value="Imidazolonepropionase"/>
    <property type="match status" value="1"/>
</dbReference>
<dbReference type="Gene3D" id="3.20.20.140">
    <property type="entry name" value="Metal-dependent hydrolases"/>
    <property type="match status" value="1"/>
</dbReference>
<dbReference type="Gene3D" id="2.30.40.10">
    <property type="entry name" value="Urease, subunit C, domain 1"/>
    <property type="match status" value="1"/>
</dbReference>
<dbReference type="HAMAP" id="MF_00372">
    <property type="entry name" value="HutI"/>
    <property type="match status" value="1"/>
</dbReference>
<dbReference type="InterPro" id="IPR006680">
    <property type="entry name" value="Amidohydro-rel"/>
</dbReference>
<dbReference type="InterPro" id="IPR005920">
    <property type="entry name" value="HutI"/>
</dbReference>
<dbReference type="InterPro" id="IPR011059">
    <property type="entry name" value="Metal-dep_hydrolase_composite"/>
</dbReference>
<dbReference type="InterPro" id="IPR032466">
    <property type="entry name" value="Metal_Hydrolase"/>
</dbReference>
<dbReference type="NCBIfam" id="TIGR01224">
    <property type="entry name" value="hutI"/>
    <property type="match status" value="1"/>
</dbReference>
<dbReference type="PANTHER" id="PTHR42752">
    <property type="entry name" value="IMIDAZOLONEPROPIONASE"/>
    <property type="match status" value="1"/>
</dbReference>
<dbReference type="PANTHER" id="PTHR42752:SF1">
    <property type="entry name" value="IMIDAZOLONEPROPIONASE-RELATED"/>
    <property type="match status" value="1"/>
</dbReference>
<dbReference type="Pfam" id="PF01979">
    <property type="entry name" value="Amidohydro_1"/>
    <property type="match status" value="1"/>
</dbReference>
<dbReference type="SUPFAM" id="SSF51338">
    <property type="entry name" value="Composite domain of metallo-dependent hydrolases"/>
    <property type="match status" value="1"/>
</dbReference>
<dbReference type="SUPFAM" id="SSF51556">
    <property type="entry name" value="Metallo-dependent hydrolases"/>
    <property type="match status" value="1"/>
</dbReference>
<proteinExistence type="inferred from homology"/>
<sequence length="395" mass="41172">MMILGNLRVATLSDGYGLIPDAAILIEGGRIQWVGPEAHLPPSAAPRHDMGGRLCTPALIDCHTHAVFAGTRAAEFEMRLKGASYAEVAAAGGGIVSTVTATRAASADELLAASLPRIDAMLAGGVGTVEIKSGYGLDIETELRMLRVARRIGELRKVRVRTSFLGAHAVPPDYRGRPDAYLAEVVLPALKVAQDEGLVDAVDGFCEGIAFSPAQIAHLFAQAHKLRLPVKLHAEQLSNLGGAALAARHDALSADHLEYLDAEGVAALAAAGTVAVLLPGAFYALRETQAPPVAALRAAGVPMAVATDLNPGTSPLGALGLAMNMACTLFRLTPEEALAGTTIHAARALGLSDTGRIAPGFRADLAIWEAEHPAELSWRIGPAPLHARLHEGEFV</sequence>
<accession>A3PK22</accession>
<keyword id="KW-0963">Cytoplasm</keyword>
<keyword id="KW-0369">Histidine metabolism</keyword>
<keyword id="KW-0378">Hydrolase</keyword>
<keyword id="KW-0408">Iron</keyword>
<keyword id="KW-0479">Metal-binding</keyword>
<keyword id="KW-0862">Zinc</keyword>